<evidence type="ECO:0000255" key="1">
    <source>
        <dbReference type="HAMAP-Rule" id="MF_04128"/>
    </source>
</evidence>
<dbReference type="EC" id="3.1.4.-" evidence="1"/>
<dbReference type="EC" id="2.7.7.50" evidence="1"/>
<dbReference type="EC" id="2.1.1.56" evidence="1"/>
<dbReference type="EMBL" id="EF583019">
    <property type="protein sequence ID" value="ABU87828.1"/>
    <property type="molecule type" value="Genomic_RNA"/>
</dbReference>
<dbReference type="SMR" id="B1NKR1"/>
<dbReference type="Proteomes" id="UP000001456">
    <property type="component" value="Genome"/>
</dbReference>
<dbReference type="GO" id="GO:0019013">
    <property type="term" value="C:viral nucleocapsid"/>
    <property type="evidence" value="ECO:0007669"/>
    <property type="project" value="UniProtKB-UniRule"/>
</dbReference>
<dbReference type="GO" id="GO:0005525">
    <property type="term" value="F:GTP binding"/>
    <property type="evidence" value="ECO:0007669"/>
    <property type="project" value="UniProtKB-UniRule"/>
</dbReference>
<dbReference type="GO" id="GO:0016787">
    <property type="term" value="F:hydrolase activity"/>
    <property type="evidence" value="ECO:0007669"/>
    <property type="project" value="UniProtKB-KW"/>
</dbReference>
<dbReference type="GO" id="GO:0004482">
    <property type="term" value="F:mRNA 5'-cap (guanine-N7-)-methyltransferase activity"/>
    <property type="evidence" value="ECO:0007669"/>
    <property type="project" value="UniProtKB-UniRule"/>
</dbReference>
<dbReference type="GO" id="GO:0004484">
    <property type="term" value="F:mRNA guanylyltransferase activity"/>
    <property type="evidence" value="ECO:0007669"/>
    <property type="project" value="UniProtKB-UniRule"/>
</dbReference>
<dbReference type="GO" id="GO:0003723">
    <property type="term" value="F:RNA binding"/>
    <property type="evidence" value="ECO:0007669"/>
    <property type="project" value="UniProtKB-UniRule"/>
</dbReference>
<dbReference type="GO" id="GO:0052170">
    <property type="term" value="P:symbiont-mediated suppression of host innate immune response"/>
    <property type="evidence" value="ECO:0007669"/>
    <property type="project" value="UniProtKB-KW"/>
</dbReference>
<dbReference type="GO" id="GO:0016032">
    <property type="term" value="P:viral process"/>
    <property type="evidence" value="ECO:0007669"/>
    <property type="project" value="UniProtKB-UniRule"/>
</dbReference>
<dbReference type="CDD" id="cd20757">
    <property type="entry name" value="capping_2-OMTase_Rotavirus"/>
    <property type="match status" value="1"/>
</dbReference>
<dbReference type="HAMAP" id="MF_04124">
    <property type="entry name" value="Rota_VP3"/>
    <property type="match status" value="1"/>
</dbReference>
<dbReference type="HAMAP" id="MF_04128">
    <property type="entry name" value="Rota_VP3_A"/>
    <property type="match status" value="1"/>
</dbReference>
<dbReference type="InterPro" id="IPR011181">
    <property type="entry name" value="VP3_Rotav"/>
</dbReference>
<dbReference type="Pfam" id="PF06929">
    <property type="entry name" value="Rotavirus_VP3"/>
    <property type="match status" value="1"/>
</dbReference>
<dbReference type="PIRSF" id="PIRSF004015">
    <property type="entry name" value="LigT_rotavirus"/>
    <property type="match status" value="1"/>
</dbReference>
<dbReference type="PROSITE" id="PS51589">
    <property type="entry name" value="SAM_MT56_VP3"/>
    <property type="match status" value="1"/>
</dbReference>
<reference key="1">
    <citation type="journal article" date="2008" name="J. Virol.">
        <title>Full genome-based classification of rotaviruses reveals a common origin between human Wa-Like and porcine rotavirus strains and human DS-1-like and bovine rotavirus strains.</title>
        <authorList>
            <person name="Matthijnssens J."/>
            <person name="Ciarlet M."/>
            <person name="Heiman E.M."/>
            <person name="Arijs I."/>
            <person name="Delbeke T."/>
            <person name="McDonald S.M."/>
            <person name="Palombo E.A."/>
            <person name="Iturriza-Gomara M."/>
            <person name="Maes P."/>
            <person name="Patton J.T."/>
            <person name="Rahman M."/>
            <person name="Van Ranst M."/>
        </authorList>
    </citation>
    <scope>NUCLEOTIDE SEQUENCE [GENOMIC RNA]</scope>
</reference>
<sequence length="835" mass="98162">MKVLALRHSVAQVYADTQIYTHDETKDDYENAFLISNLTTHNILYLNYSVKTLQILNKSGIAAVEIQKMDELFTLIRCNFTYDYIEDIVYLHDYSYYTNNEIRTDQHWVTKTNIEDYLLPGWKLTYVGYNGSDTRGHYNFSFKCQNAATDDDAIIEYIYSNELDFQNFILKKIKERMTTSLPIARLSNRVFRDKLFKTLVSDHSKVVNVGPRNESMFTFLDHPSIKQFSNGPYLVKDTIKLKQERWLGKRLSQFDIGQYKNMLNVLTTLYQYYDMYHEKPIIYMIGSAPSYWIYDVKQYSNLKFETWDPLDTPYSDLHHKELFYISDVTKLKDNSILYVDIRTDRENMDWKTWRKIVEEQTINNLNIAYRYLSTGKAKVCCVKMTAMDLELPISAKLLHHPTTEIRSEFYLIMDIWDSKNIKRFIPKGVLYSYINNVITENVFIQQPFKLKTLRNEYVVALYALSNDFNNREDVIKLVNNQKNALITVRINNTFKDEPKVGFKDIYDWTFLPTDFETNESIITSYDGCLGMFGLSISLASKPTGNNHLFILSGTNKYFKLDQFANHMSISRRSHQIRFSESATSYSGYIFRDLSNNNFNLIGTNVENSVSGHVYNALIYYRYNYSFDLKRWIYLHSTNKASIEGGRYYEHAPIELIYACRSAREFARLQDDLTVLRYSNEIENYINKVYSITYADDPNYFIGIKFKNIPYEYDVKVPHLTFGVLNISNSMVPDVVAILKKFKSELFRMDVTTSYTYMLSDEIYVANVSGVLSTYFKLYNAFYKEQITFGQSRMFIPHITLSFSDKKVVRIDSTRLNIDFIYLRKIKGDTVFDMAE</sequence>
<feature type="chain" id="PRO_0000368069" description="Protein VP3">
    <location>
        <begin position="1"/>
        <end position="835"/>
    </location>
</feature>
<feature type="region of interest" description="N7-methyltransferase activity" evidence="1">
    <location>
        <begin position="171"/>
        <end position="245"/>
    </location>
</feature>
<feature type="region of interest" description="2'-O-methyltransferase activity" evidence="1">
    <location>
        <begin position="246"/>
        <end position="428"/>
    </location>
</feature>
<feature type="region of interest" description="N7-methyltransferase activity" evidence="1">
    <location>
        <begin position="429"/>
        <end position="555"/>
    </location>
</feature>
<feature type="region of interest" description="GTase/RTPase activity" evidence="1">
    <location>
        <begin position="556"/>
        <end position="692"/>
    </location>
</feature>
<feature type="region of interest" description="2'-5'-phosphodiesterase activity" evidence="1">
    <location>
        <begin position="693"/>
        <end position="835"/>
    </location>
</feature>
<feature type="active site" description="For 2'-5'-phosphodiesterase activity" evidence="1">
    <location>
        <position position="718"/>
    </location>
</feature>
<feature type="active site" description="For 2'-5'-phosphodiesterase activity" evidence="1">
    <location>
        <position position="720"/>
    </location>
</feature>
<feature type="active site" description="For 2'-5'-phosphodiesterase activity" evidence="1">
    <location>
        <position position="797"/>
    </location>
</feature>
<feature type="active site" description="For 2'-5'-phosphodiesterase activity" evidence="1">
    <location>
        <position position="799"/>
    </location>
</feature>
<organismHost>
    <name type="scientific">Homo sapiens</name>
    <name type="common">Human</name>
    <dbReference type="NCBI Taxonomy" id="9606"/>
</organismHost>
<organism>
    <name type="scientific">Rotavirus A (isolate RVA/Human/United Kingdom/A64/1987/G10P11[14])</name>
    <name type="common">RV-A</name>
    <dbReference type="NCBI Taxonomy" id="578827"/>
    <lineage>
        <taxon>Viruses</taxon>
        <taxon>Riboviria</taxon>
        <taxon>Orthornavirae</taxon>
        <taxon>Duplornaviricota</taxon>
        <taxon>Resentoviricetes</taxon>
        <taxon>Reovirales</taxon>
        <taxon>Sedoreoviridae</taxon>
        <taxon>Rotavirus</taxon>
        <taxon>Rotavirus A</taxon>
    </lineage>
</organism>
<comment type="function">
    <text evidence="1">Multifunctional enzyme involved in mRNA capping. Catalyzes the formation of the 5' cap structure on the viral plus-strand transcripts. Specifically binds to GTP and displays guanylyltransferase and methyltransferase activities. Has affinity for ssRNA but not for dsRNA. Capping activity is non-specific and caps RNAs that initiate with either a G or an A residue. Together with VP1 polymerase, forms a VP1-VP3 complex positioned near the channels situated at each of the five-fold vertices of the core. Following infection, the outermost layer of the virus is lost, leaving a double-layered particle (DLP) made up of the core and VP6 shell. VP1 then catalyzes the transcription of fully conservative plus-strand genomic RNAs that are capped by VP3 and extruded through the DLP's channels into the cytoplasm where they function as mRNAs for translation of viral proteins. DLPs probably have an RNA triphosphatase activity as well, whereas open cores do not.</text>
</comment>
<comment type="function">
    <text evidence="1">Counteracts the host innate immune response thanks to its phosphodiesterase that degrades the 5'-triphosphorylated, 2'-5' linked adenylate oligomers produced by the host cell IFN-inducible 2',5'-oligoadenylate synthetase (OAS). The host RNaseL is therefore not activated.</text>
</comment>
<comment type="catalytic activity">
    <reaction evidence="1">
        <text>a 5'-end diphospho-ribonucleoside in mRNA + GTP + H(+) = a 5'-end (5'-triphosphoguanosine)-ribonucleoside in mRNA + diphosphate</text>
        <dbReference type="Rhea" id="RHEA:67012"/>
        <dbReference type="Rhea" id="RHEA-COMP:17165"/>
        <dbReference type="Rhea" id="RHEA-COMP:17166"/>
        <dbReference type="ChEBI" id="CHEBI:15378"/>
        <dbReference type="ChEBI" id="CHEBI:33019"/>
        <dbReference type="ChEBI" id="CHEBI:37565"/>
        <dbReference type="ChEBI" id="CHEBI:167616"/>
        <dbReference type="ChEBI" id="CHEBI:167617"/>
        <dbReference type="EC" id="2.7.7.50"/>
    </reaction>
</comment>
<comment type="catalytic activity">
    <reaction evidence="1">
        <text>a 5'-end (5'-triphosphoguanosine)-ribonucleoside in mRNA + S-adenosyl-L-methionine = a 5'-end (N(7)-methyl 5'-triphosphoguanosine)-ribonucleoside in mRNA + S-adenosyl-L-homocysteine</text>
        <dbReference type="Rhea" id="RHEA:67008"/>
        <dbReference type="Rhea" id="RHEA-COMP:17166"/>
        <dbReference type="Rhea" id="RHEA-COMP:17167"/>
        <dbReference type="ChEBI" id="CHEBI:57856"/>
        <dbReference type="ChEBI" id="CHEBI:59789"/>
        <dbReference type="ChEBI" id="CHEBI:156461"/>
        <dbReference type="ChEBI" id="CHEBI:167617"/>
        <dbReference type="EC" id="2.1.1.56"/>
    </reaction>
</comment>
<comment type="catalytic activity">
    <reaction evidence="1">
        <text>5'-triphosphoadenylyl-(2'-&gt;5')-adenylyl-(2'-&gt;5')-adenosine + 2 H2O = 2 AMP + ATP + 2 H(+)</text>
        <dbReference type="Rhea" id="RHEA:45964"/>
        <dbReference type="ChEBI" id="CHEBI:15377"/>
        <dbReference type="ChEBI" id="CHEBI:15378"/>
        <dbReference type="ChEBI" id="CHEBI:30616"/>
        <dbReference type="ChEBI" id="CHEBI:67143"/>
        <dbReference type="ChEBI" id="CHEBI:456215"/>
    </reaction>
</comment>
<comment type="subunit">
    <text evidence="1">Interacts with VP1. Interacts with VP2.</text>
</comment>
<comment type="subcellular location">
    <subcellularLocation>
        <location evidence="1">Virion</location>
    </subcellularLocation>
    <text evidence="1">Attached inside the inner capsid as a minor component. There are about 11 to 12 copies per virion.</text>
</comment>
<comment type="domain">
    <text evidence="1">Contains a bipartite N7-methyltransferase domain, a 2'-O-methyltransferase domain and a GTase/RTPase domain. The C-terminus contains a phosphodiesterase domain that degrades the 5'-triphosphorylated, 2'-5' linked adenylate oligomers produced by the host cell in response to IFN stimulation.</text>
</comment>
<comment type="similarity">
    <text evidence="1">Belongs to the rotavirus VP3 family.</text>
</comment>
<protein>
    <recommendedName>
        <fullName evidence="1">Protein VP3</fullName>
    </recommendedName>
    <domain>
        <recommendedName>
            <fullName evidence="1">2',5'-phosphodiesterase</fullName>
            <ecNumber evidence="1">3.1.4.-</ecNumber>
        </recommendedName>
    </domain>
    <domain>
        <recommendedName>
            <fullName evidence="1">mRNA guanylyltransferase</fullName>
            <ecNumber evidence="1">2.7.7.50</ecNumber>
        </recommendedName>
    </domain>
    <domain>
        <recommendedName>
            <fullName evidence="1">mRNA (guanine-N(7))-methyltransferase</fullName>
            <ecNumber evidence="1">2.1.1.56</ecNumber>
        </recommendedName>
    </domain>
</protein>
<keyword id="KW-0342">GTP-binding</keyword>
<keyword id="KW-0945">Host-virus interaction</keyword>
<keyword id="KW-0378">Hydrolase</keyword>
<keyword id="KW-1090">Inhibition of host innate immune response by virus</keyword>
<keyword id="KW-0489">Methyltransferase</keyword>
<keyword id="KW-0506">mRNA capping</keyword>
<keyword id="KW-0507">mRNA processing</keyword>
<keyword id="KW-0511">Multifunctional enzyme</keyword>
<keyword id="KW-0547">Nucleotide-binding</keyword>
<keyword id="KW-0548">Nucleotidyltransferase</keyword>
<keyword id="KW-0694">RNA-binding</keyword>
<keyword id="KW-0949">S-adenosyl-L-methionine</keyword>
<keyword id="KW-0808">Transferase</keyword>
<keyword id="KW-0899">Viral immunoevasion</keyword>
<keyword id="KW-0946">Virion</keyword>
<name>VP3_ROTH7</name>
<proteinExistence type="inferred from homology"/>
<accession>B1NKR1</accession>